<accession>A4JCC5</accession>
<feature type="chain" id="PRO_1000005904" description="DNA-directed RNA polymerase subunit omega">
    <location>
        <begin position="1"/>
        <end position="67"/>
    </location>
</feature>
<reference key="1">
    <citation type="submission" date="2007-03" db="EMBL/GenBank/DDBJ databases">
        <title>Complete sequence of chromosome 1 of Burkholderia vietnamiensis G4.</title>
        <authorList>
            <consortium name="US DOE Joint Genome Institute"/>
            <person name="Copeland A."/>
            <person name="Lucas S."/>
            <person name="Lapidus A."/>
            <person name="Barry K."/>
            <person name="Detter J.C."/>
            <person name="Glavina del Rio T."/>
            <person name="Hammon N."/>
            <person name="Israni S."/>
            <person name="Dalin E."/>
            <person name="Tice H."/>
            <person name="Pitluck S."/>
            <person name="Chain P."/>
            <person name="Malfatti S."/>
            <person name="Shin M."/>
            <person name="Vergez L."/>
            <person name="Schmutz J."/>
            <person name="Larimer F."/>
            <person name="Land M."/>
            <person name="Hauser L."/>
            <person name="Kyrpides N."/>
            <person name="Tiedje J."/>
            <person name="Richardson P."/>
        </authorList>
    </citation>
    <scope>NUCLEOTIDE SEQUENCE [LARGE SCALE GENOMIC DNA]</scope>
    <source>
        <strain>G4 / LMG 22486</strain>
    </source>
</reference>
<sequence length="67" mass="7428">MARITVEDCLKQIPNRFELALAATYRARQLAQGHTPKIESRDKPTVVALREIAAGQVGVEMLKKVPV</sequence>
<keyword id="KW-0240">DNA-directed RNA polymerase</keyword>
<keyword id="KW-0548">Nucleotidyltransferase</keyword>
<keyword id="KW-0804">Transcription</keyword>
<keyword id="KW-0808">Transferase</keyword>
<proteinExistence type="inferred from homology"/>
<name>RPOZ_BURVG</name>
<comment type="function">
    <text evidence="1">Promotes RNA polymerase assembly. Latches the N- and C-terminal regions of the beta' subunit thereby facilitating its interaction with the beta and alpha subunits.</text>
</comment>
<comment type="catalytic activity">
    <reaction evidence="1">
        <text>RNA(n) + a ribonucleoside 5'-triphosphate = RNA(n+1) + diphosphate</text>
        <dbReference type="Rhea" id="RHEA:21248"/>
        <dbReference type="Rhea" id="RHEA-COMP:14527"/>
        <dbReference type="Rhea" id="RHEA-COMP:17342"/>
        <dbReference type="ChEBI" id="CHEBI:33019"/>
        <dbReference type="ChEBI" id="CHEBI:61557"/>
        <dbReference type="ChEBI" id="CHEBI:140395"/>
        <dbReference type="EC" id="2.7.7.6"/>
    </reaction>
</comment>
<comment type="subunit">
    <text evidence="1">The RNAP catalytic core consists of 2 alpha, 1 beta, 1 beta' and 1 omega subunit. When a sigma factor is associated with the core the holoenzyme is formed, which can initiate transcription.</text>
</comment>
<comment type="similarity">
    <text evidence="1">Belongs to the RNA polymerase subunit omega family.</text>
</comment>
<dbReference type="EC" id="2.7.7.6" evidence="1"/>
<dbReference type="EMBL" id="CP000614">
    <property type="protein sequence ID" value="ABO53928.1"/>
    <property type="molecule type" value="Genomic_DNA"/>
</dbReference>
<dbReference type="SMR" id="A4JCC5"/>
<dbReference type="KEGG" id="bvi:Bcep1808_0917"/>
<dbReference type="eggNOG" id="COG1758">
    <property type="taxonomic scope" value="Bacteria"/>
</dbReference>
<dbReference type="HOGENOM" id="CLU_125406_5_2_4"/>
<dbReference type="Proteomes" id="UP000002287">
    <property type="component" value="Chromosome 1"/>
</dbReference>
<dbReference type="GO" id="GO:0000428">
    <property type="term" value="C:DNA-directed RNA polymerase complex"/>
    <property type="evidence" value="ECO:0007669"/>
    <property type="project" value="UniProtKB-KW"/>
</dbReference>
<dbReference type="GO" id="GO:0003677">
    <property type="term" value="F:DNA binding"/>
    <property type="evidence" value="ECO:0007669"/>
    <property type="project" value="UniProtKB-UniRule"/>
</dbReference>
<dbReference type="GO" id="GO:0003899">
    <property type="term" value="F:DNA-directed RNA polymerase activity"/>
    <property type="evidence" value="ECO:0007669"/>
    <property type="project" value="UniProtKB-UniRule"/>
</dbReference>
<dbReference type="GO" id="GO:0006351">
    <property type="term" value="P:DNA-templated transcription"/>
    <property type="evidence" value="ECO:0007669"/>
    <property type="project" value="UniProtKB-UniRule"/>
</dbReference>
<dbReference type="Gene3D" id="3.90.940.10">
    <property type="match status" value="1"/>
</dbReference>
<dbReference type="HAMAP" id="MF_00366">
    <property type="entry name" value="RNApol_bact_RpoZ"/>
    <property type="match status" value="1"/>
</dbReference>
<dbReference type="InterPro" id="IPR003716">
    <property type="entry name" value="DNA-dir_RNA_pol_omega"/>
</dbReference>
<dbReference type="InterPro" id="IPR006110">
    <property type="entry name" value="Pol_omega/Rpo6/RPB6"/>
</dbReference>
<dbReference type="InterPro" id="IPR036161">
    <property type="entry name" value="RPB6/omega-like_sf"/>
</dbReference>
<dbReference type="NCBIfam" id="TIGR00690">
    <property type="entry name" value="rpoZ"/>
    <property type="match status" value="1"/>
</dbReference>
<dbReference type="PANTHER" id="PTHR34476">
    <property type="entry name" value="DNA-DIRECTED RNA POLYMERASE SUBUNIT OMEGA"/>
    <property type="match status" value="1"/>
</dbReference>
<dbReference type="PANTHER" id="PTHR34476:SF1">
    <property type="entry name" value="DNA-DIRECTED RNA POLYMERASE SUBUNIT OMEGA"/>
    <property type="match status" value="1"/>
</dbReference>
<dbReference type="Pfam" id="PF01192">
    <property type="entry name" value="RNA_pol_Rpb6"/>
    <property type="match status" value="1"/>
</dbReference>
<dbReference type="SMART" id="SM01409">
    <property type="entry name" value="RNA_pol_Rpb6"/>
    <property type="match status" value="1"/>
</dbReference>
<dbReference type="SUPFAM" id="SSF63562">
    <property type="entry name" value="RPB6/omega subunit-like"/>
    <property type="match status" value="1"/>
</dbReference>
<protein>
    <recommendedName>
        <fullName evidence="1">DNA-directed RNA polymerase subunit omega</fullName>
        <shortName evidence="1">RNAP omega subunit</shortName>
        <ecNumber evidence="1">2.7.7.6</ecNumber>
    </recommendedName>
    <alternativeName>
        <fullName evidence="1">RNA polymerase omega subunit</fullName>
    </alternativeName>
    <alternativeName>
        <fullName evidence="1">Transcriptase subunit omega</fullName>
    </alternativeName>
</protein>
<organism>
    <name type="scientific">Burkholderia vietnamiensis (strain G4 / LMG 22486)</name>
    <name type="common">Burkholderia cepacia (strain R1808)</name>
    <dbReference type="NCBI Taxonomy" id="269482"/>
    <lineage>
        <taxon>Bacteria</taxon>
        <taxon>Pseudomonadati</taxon>
        <taxon>Pseudomonadota</taxon>
        <taxon>Betaproteobacteria</taxon>
        <taxon>Burkholderiales</taxon>
        <taxon>Burkholderiaceae</taxon>
        <taxon>Burkholderia</taxon>
        <taxon>Burkholderia cepacia complex</taxon>
    </lineage>
</organism>
<gene>
    <name evidence="1" type="primary">rpoZ</name>
    <name type="ordered locus">Bcep1808_0917</name>
</gene>
<evidence type="ECO:0000255" key="1">
    <source>
        <dbReference type="HAMAP-Rule" id="MF_00366"/>
    </source>
</evidence>